<organism>
    <name type="scientific">Corynebacterium glutamicum (strain ATCC 13032 / DSM 20300 / JCM 1318 / BCRC 11384 / CCUG 27702 / LMG 3730 / NBRC 12168 / NCIMB 10025 / NRRL B-2784 / 534)</name>
    <dbReference type="NCBI Taxonomy" id="196627"/>
    <lineage>
        <taxon>Bacteria</taxon>
        <taxon>Bacillati</taxon>
        <taxon>Actinomycetota</taxon>
        <taxon>Actinomycetes</taxon>
        <taxon>Mycobacteriales</taxon>
        <taxon>Corynebacteriaceae</taxon>
        <taxon>Corynebacterium</taxon>
    </lineage>
</organism>
<sequence length="227" mass="25010">MSERRQDYKRHGSRYKARMRAVDILFEAESRDVDPVAIIDDRHKLARDTNPIVAPVAEYTETIINGVAVELDTLDVFLAEHIAETWTLGRLPSVDRAILRVASWEMIYNADVPVTTAIVEAVEIASEYSGDKSSAYINATLDAMASKVETLRERAANPEAVLAEASESLDDAPVAPWDDSDALDDSDEDFEAVDAAEVFEAEETVEVSEVAEDSEVSKVSEEKADES</sequence>
<proteinExistence type="inferred from homology"/>
<keyword id="KW-1185">Reference proteome</keyword>
<keyword id="KW-0694">RNA-binding</keyword>
<keyword id="KW-0804">Transcription</keyword>
<keyword id="KW-0889">Transcription antitermination</keyword>
<keyword id="KW-0805">Transcription regulation</keyword>
<reference key="1">
    <citation type="journal article" date="2003" name="Appl. Microbiol. Biotechnol.">
        <title>The Corynebacterium glutamicum genome: features and impacts on biotechnological processes.</title>
        <authorList>
            <person name="Ikeda M."/>
            <person name="Nakagawa S."/>
        </authorList>
    </citation>
    <scope>NUCLEOTIDE SEQUENCE [LARGE SCALE GENOMIC DNA]</scope>
    <source>
        <strain>ATCC 13032 / DSM 20300 / JCM 1318 / BCRC 11384 / CCUG 27702 / LMG 3730 / NBRC 12168 / NCIMB 10025 / NRRL B-2784 / 534</strain>
    </source>
</reference>
<reference key="2">
    <citation type="journal article" date="2003" name="J. Biotechnol.">
        <title>The complete Corynebacterium glutamicum ATCC 13032 genome sequence and its impact on the production of L-aspartate-derived amino acids and vitamins.</title>
        <authorList>
            <person name="Kalinowski J."/>
            <person name="Bathe B."/>
            <person name="Bartels D."/>
            <person name="Bischoff N."/>
            <person name="Bott M."/>
            <person name="Burkovski A."/>
            <person name="Dusch N."/>
            <person name="Eggeling L."/>
            <person name="Eikmanns B.J."/>
            <person name="Gaigalat L."/>
            <person name="Goesmann A."/>
            <person name="Hartmann M."/>
            <person name="Huthmacher K."/>
            <person name="Kraemer R."/>
            <person name="Linke B."/>
            <person name="McHardy A.C."/>
            <person name="Meyer F."/>
            <person name="Moeckel B."/>
            <person name="Pfefferle W."/>
            <person name="Puehler A."/>
            <person name="Rey D.A."/>
            <person name="Rueckert C."/>
            <person name="Rupp O."/>
            <person name="Sahm H."/>
            <person name="Wendisch V.F."/>
            <person name="Wiegraebe I."/>
            <person name="Tauch A."/>
        </authorList>
    </citation>
    <scope>NUCLEOTIDE SEQUENCE [LARGE SCALE GENOMIC DNA]</scope>
    <source>
        <strain>ATCC 13032 / DSM 20300 / JCM 1318 / BCRC 11384 / CCUG 27702 / LMG 3730 / NBRC 12168 / NCIMB 10025 / NRRL B-2784 / 534</strain>
    </source>
</reference>
<evidence type="ECO:0000255" key="1">
    <source>
        <dbReference type="HAMAP-Rule" id="MF_00073"/>
    </source>
</evidence>
<evidence type="ECO:0000256" key="2">
    <source>
        <dbReference type="SAM" id="MobiDB-lite"/>
    </source>
</evidence>
<feature type="chain" id="PRO_0000176533" description="Transcription antitermination protein NusB">
    <location>
        <begin position="1"/>
        <end position="227"/>
    </location>
</feature>
<feature type="region of interest" description="Disordered" evidence="2">
    <location>
        <begin position="165"/>
        <end position="189"/>
    </location>
</feature>
<feature type="region of interest" description="Disordered" evidence="2">
    <location>
        <begin position="201"/>
        <end position="227"/>
    </location>
</feature>
<feature type="compositionally biased region" description="Acidic residues" evidence="2">
    <location>
        <begin position="178"/>
        <end position="189"/>
    </location>
</feature>
<feature type="compositionally biased region" description="Acidic residues" evidence="2">
    <location>
        <begin position="201"/>
        <end position="214"/>
    </location>
</feature>
<feature type="compositionally biased region" description="Basic and acidic residues" evidence="2">
    <location>
        <begin position="215"/>
        <end position="227"/>
    </location>
</feature>
<gene>
    <name evidence="1" type="primary">nusB</name>
    <name type="ordered locus">Cgl1618</name>
    <name type="ordered locus">cg1824</name>
</gene>
<accession>Q8NQ33</accession>
<dbReference type="EMBL" id="BA000036">
    <property type="protein sequence ID" value="BAB99011.1"/>
    <property type="molecule type" value="Genomic_DNA"/>
</dbReference>
<dbReference type="EMBL" id="BX927152">
    <property type="protein sequence ID" value="CAF21627.1"/>
    <property type="molecule type" value="Genomic_DNA"/>
</dbReference>
<dbReference type="RefSeq" id="NP_600832.1">
    <property type="nucleotide sequence ID" value="NC_003450.3"/>
</dbReference>
<dbReference type="RefSeq" id="WP_011014484.1">
    <property type="nucleotide sequence ID" value="NC_006958.1"/>
</dbReference>
<dbReference type="SMR" id="Q8NQ33"/>
<dbReference type="STRING" id="196627.cg1824"/>
<dbReference type="GeneID" id="1019587"/>
<dbReference type="KEGG" id="cgb:cg1824"/>
<dbReference type="KEGG" id="cgl:Cgl1618"/>
<dbReference type="PATRIC" id="fig|196627.13.peg.1580"/>
<dbReference type="eggNOG" id="COG0781">
    <property type="taxonomic scope" value="Bacteria"/>
</dbReference>
<dbReference type="HOGENOM" id="CLU_087843_2_0_11"/>
<dbReference type="OrthoDB" id="3528057at2"/>
<dbReference type="BioCyc" id="CORYNE:G18NG-11203-MONOMER"/>
<dbReference type="Proteomes" id="UP000000582">
    <property type="component" value="Chromosome"/>
</dbReference>
<dbReference type="Proteomes" id="UP000001009">
    <property type="component" value="Chromosome"/>
</dbReference>
<dbReference type="GO" id="GO:0005829">
    <property type="term" value="C:cytosol"/>
    <property type="evidence" value="ECO:0007669"/>
    <property type="project" value="TreeGrafter"/>
</dbReference>
<dbReference type="GO" id="GO:0003723">
    <property type="term" value="F:RNA binding"/>
    <property type="evidence" value="ECO:0007669"/>
    <property type="project" value="UniProtKB-UniRule"/>
</dbReference>
<dbReference type="GO" id="GO:0006353">
    <property type="term" value="P:DNA-templated transcription termination"/>
    <property type="evidence" value="ECO:0007669"/>
    <property type="project" value="UniProtKB-UniRule"/>
</dbReference>
<dbReference type="GO" id="GO:0031564">
    <property type="term" value="P:transcription antitermination"/>
    <property type="evidence" value="ECO:0007669"/>
    <property type="project" value="UniProtKB-KW"/>
</dbReference>
<dbReference type="Gene3D" id="1.10.940.10">
    <property type="entry name" value="NusB-like"/>
    <property type="match status" value="1"/>
</dbReference>
<dbReference type="HAMAP" id="MF_00073">
    <property type="entry name" value="NusB"/>
    <property type="match status" value="1"/>
</dbReference>
<dbReference type="InterPro" id="IPR035926">
    <property type="entry name" value="NusB-like_sf"/>
</dbReference>
<dbReference type="InterPro" id="IPR011605">
    <property type="entry name" value="NusB_fam"/>
</dbReference>
<dbReference type="InterPro" id="IPR006027">
    <property type="entry name" value="NusB_RsmB_TIM44"/>
</dbReference>
<dbReference type="NCBIfam" id="TIGR01951">
    <property type="entry name" value="nusB"/>
    <property type="match status" value="1"/>
</dbReference>
<dbReference type="PANTHER" id="PTHR11078:SF3">
    <property type="entry name" value="ANTITERMINATION NUSB DOMAIN-CONTAINING PROTEIN"/>
    <property type="match status" value="1"/>
</dbReference>
<dbReference type="PANTHER" id="PTHR11078">
    <property type="entry name" value="N UTILIZATION SUBSTANCE PROTEIN B-RELATED"/>
    <property type="match status" value="1"/>
</dbReference>
<dbReference type="Pfam" id="PF01029">
    <property type="entry name" value="NusB"/>
    <property type="match status" value="1"/>
</dbReference>
<dbReference type="SUPFAM" id="SSF48013">
    <property type="entry name" value="NusB-like"/>
    <property type="match status" value="1"/>
</dbReference>
<protein>
    <recommendedName>
        <fullName evidence="1">Transcription antitermination protein NusB</fullName>
    </recommendedName>
    <alternativeName>
        <fullName evidence="1">Antitermination factor NusB</fullName>
    </alternativeName>
</protein>
<name>NUSB_CORGL</name>
<comment type="function">
    <text evidence="1">Involved in transcription antitermination. Required for transcription of ribosomal RNA (rRNA) genes. Binds specifically to the boxA antiterminator sequence of the ribosomal RNA (rrn) operons.</text>
</comment>
<comment type="similarity">
    <text evidence="1">Belongs to the NusB family.</text>
</comment>